<evidence type="ECO:0000250" key="1">
    <source>
        <dbReference type="UniProtKB" id="P30624"/>
    </source>
</evidence>
<evidence type="ECO:0000250" key="2">
    <source>
        <dbReference type="UniProtKB" id="P38137"/>
    </source>
</evidence>
<evidence type="ECO:0000250" key="3">
    <source>
        <dbReference type="UniProtKB" id="P69451"/>
    </source>
</evidence>
<evidence type="ECO:0000255" key="4"/>
<evidence type="ECO:0000269" key="5">
    <source>
    </source>
</evidence>
<evidence type="ECO:0000305" key="6"/>
<protein>
    <recommendedName>
        <fullName evidence="6">Oxalate--CoA ligase</fullName>
        <ecNumber evidence="2">6.2.1.8</ecNumber>
    </recommendedName>
    <alternativeName>
        <fullName>Oxalyl-CoA synthetase</fullName>
    </alternativeName>
    <alternativeName>
        <fullName>Peroxisomal-coenzyme A synthetase</fullName>
    </alternativeName>
</protein>
<reference key="1">
    <citation type="journal article" date="2002" name="Nature">
        <title>The genome sequence of Schizosaccharomyces pombe.</title>
        <authorList>
            <person name="Wood V."/>
            <person name="Gwilliam R."/>
            <person name="Rajandream M.A."/>
            <person name="Lyne M.H."/>
            <person name="Lyne R."/>
            <person name="Stewart A."/>
            <person name="Sgouros J.G."/>
            <person name="Peat N."/>
            <person name="Hayles J."/>
            <person name="Baker S.G."/>
            <person name="Basham D."/>
            <person name="Bowman S."/>
            <person name="Brooks K."/>
            <person name="Brown D."/>
            <person name="Brown S."/>
            <person name="Chillingworth T."/>
            <person name="Churcher C.M."/>
            <person name="Collins M."/>
            <person name="Connor R."/>
            <person name="Cronin A."/>
            <person name="Davis P."/>
            <person name="Feltwell T."/>
            <person name="Fraser A."/>
            <person name="Gentles S."/>
            <person name="Goble A."/>
            <person name="Hamlin N."/>
            <person name="Harris D.E."/>
            <person name="Hidalgo J."/>
            <person name="Hodgson G."/>
            <person name="Holroyd S."/>
            <person name="Hornsby T."/>
            <person name="Howarth S."/>
            <person name="Huckle E.J."/>
            <person name="Hunt S."/>
            <person name="Jagels K."/>
            <person name="James K.D."/>
            <person name="Jones L."/>
            <person name="Jones M."/>
            <person name="Leather S."/>
            <person name="McDonald S."/>
            <person name="McLean J."/>
            <person name="Mooney P."/>
            <person name="Moule S."/>
            <person name="Mungall K.L."/>
            <person name="Murphy L.D."/>
            <person name="Niblett D."/>
            <person name="Odell C."/>
            <person name="Oliver K."/>
            <person name="O'Neil S."/>
            <person name="Pearson D."/>
            <person name="Quail M.A."/>
            <person name="Rabbinowitsch E."/>
            <person name="Rutherford K.M."/>
            <person name="Rutter S."/>
            <person name="Saunders D."/>
            <person name="Seeger K."/>
            <person name="Sharp S."/>
            <person name="Skelton J."/>
            <person name="Simmonds M.N."/>
            <person name="Squares R."/>
            <person name="Squares S."/>
            <person name="Stevens K."/>
            <person name="Taylor K."/>
            <person name="Taylor R.G."/>
            <person name="Tivey A."/>
            <person name="Walsh S.V."/>
            <person name="Warren T."/>
            <person name="Whitehead S."/>
            <person name="Woodward J.R."/>
            <person name="Volckaert G."/>
            <person name="Aert R."/>
            <person name="Robben J."/>
            <person name="Grymonprez B."/>
            <person name="Weltjens I."/>
            <person name="Vanstreels E."/>
            <person name="Rieger M."/>
            <person name="Schaefer M."/>
            <person name="Mueller-Auer S."/>
            <person name="Gabel C."/>
            <person name="Fuchs M."/>
            <person name="Duesterhoeft A."/>
            <person name="Fritzc C."/>
            <person name="Holzer E."/>
            <person name="Moestl D."/>
            <person name="Hilbert H."/>
            <person name="Borzym K."/>
            <person name="Langer I."/>
            <person name="Beck A."/>
            <person name="Lehrach H."/>
            <person name="Reinhardt R."/>
            <person name="Pohl T.M."/>
            <person name="Eger P."/>
            <person name="Zimmermann W."/>
            <person name="Wedler H."/>
            <person name="Wambutt R."/>
            <person name="Purnelle B."/>
            <person name="Goffeau A."/>
            <person name="Cadieu E."/>
            <person name="Dreano S."/>
            <person name="Gloux S."/>
            <person name="Lelaure V."/>
            <person name="Mottier S."/>
            <person name="Galibert F."/>
            <person name="Aves S.J."/>
            <person name="Xiang Z."/>
            <person name="Hunt C."/>
            <person name="Moore K."/>
            <person name="Hurst S.M."/>
            <person name="Lucas M."/>
            <person name="Rochet M."/>
            <person name="Gaillardin C."/>
            <person name="Tallada V.A."/>
            <person name="Garzon A."/>
            <person name="Thode G."/>
            <person name="Daga R.R."/>
            <person name="Cruzado L."/>
            <person name="Jimenez J."/>
            <person name="Sanchez M."/>
            <person name="del Rey F."/>
            <person name="Benito J."/>
            <person name="Dominguez A."/>
            <person name="Revuelta J.L."/>
            <person name="Moreno S."/>
            <person name="Armstrong J."/>
            <person name="Forsburg S.L."/>
            <person name="Cerutti L."/>
            <person name="Lowe T."/>
            <person name="McCombie W.R."/>
            <person name="Paulsen I."/>
            <person name="Potashkin J."/>
            <person name="Shpakovski G.V."/>
            <person name="Ussery D."/>
            <person name="Barrell B.G."/>
            <person name="Nurse P."/>
        </authorList>
    </citation>
    <scope>NUCLEOTIDE SEQUENCE [LARGE SCALE GENOMIC DNA]</scope>
    <source>
        <strain>972 / ATCC 24843</strain>
    </source>
</reference>
<reference key="2">
    <citation type="journal article" date="1997" name="DNA Res.">
        <title>Identification of open reading frames in Schizosaccharomyces pombe cDNAs.</title>
        <authorList>
            <person name="Yoshioka S."/>
            <person name="Kato K."/>
            <person name="Nakai K."/>
            <person name="Okayama H."/>
            <person name="Nojima H."/>
        </authorList>
    </citation>
    <scope>NUCLEOTIDE SEQUENCE [LARGE SCALE MRNA] OF 104-319</scope>
    <source>
        <strain>PR745</strain>
    </source>
</reference>
<reference key="3">
    <citation type="journal article" date="2008" name="J. Proteome Res.">
        <title>Phosphoproteome analysis of fission yeast.</title>
        <authorList>
            <person name="Wilson-Grady J.T."/>
            <person name="Villen J."/>
            <person name="Gygi S.P."/>
        </authorList>
    </citation>
    <scope>PHOSPHORYLATION [LARGE SCALE ANALYSIS] AT SER-283 AND SER-284</scope>
    <scope>IDENTIFICATION BY MASS SPECTROMETRY</scope>
</reference>
<name>FAT2_SCHPO</name>
<comment type="function">
    <text evidence="2">Catalyzes the first step in a degradation pathway of oxalate to CO(2) to protect the cell against the harmful effects of oxalate derived from endogenous processes or an environmental sources.</text>
</comment>
<comment type="catalytic activity">
    <reaction evidence="2">
        <text>oxalate + ATP + CoA = oxalyl-CoA + AMP + diphosphate</text>
        <dbReference type="Rhea" id="RHEA:18293"/>
        <dbReference type="ChEBI" id="CHEBI:30616"/>
        <dbReference type="ChEBI" id="CHEBI:30623"/>
        <dbReference type="ChEBI" id="CHEBI:33019"/>
        <dbReference type="ChEBI" id="CHEBI:57287"/>
        <dbReference type="ChEBI" id="CHEBI:57388"/>
        <dbReference type="ChEBI" id="CHEBI:456215"/>
        <dbReference type="EC" id="6.2.1.8"/>
    </reaction>
</comment>
<comment type="subcellular location">
    <subcellularLocation>
        <location evidence="2">Peroxisome matrix</location>
    </subcellularLocation>
    <subcellularLocation>
        <location evidence="2">Peroxisome membrane</location>
        <topology evidence="2">Peripheral membrane protein</topology>
    </subcellularLocation>
</comment>
<comment type="domain">
    <text evidence="1">The FACS motif is required for catalytic activity and substrate specificity.</text>
</comment>
<comment type="similarity">
    <text evidence="6">Belongs to the ATP-dependent AMP-binding enzyme family.</text>
</comment>
<accession>O74976</accession>
<accession>P78757</accession>
<organism>
    <name type="scientific">Schizosaccharomyces pombe (strain 972 / ATCC 24843)</name>
    <name type="common">Fission yeast</name>
    <dbReference type="NCBI Taxonomy" id="284812"/>
    <lineage>
        <taxon>Eukaryota</taxon>
        <taxon>Fungi</taxon>
        <taxon>Dikarya</taxon>
        <taxon>Ascomycota</taxon>
        <taxon>Taphrinomycotina</taxon>
        <taxon>Schizosaccharomycetes</taxon>
        <taxon>Schizosaccharomycetales</taxon>
        <taxon>Schizosaccharomycetaceae</taxon>
        <taxon>Schizosaccharomyces</taxon>
    </lineage>
</organism>
<dbReference type="EC" id="6.2.1.8" evidence="2"/>
<dbReference type="EMBL" id="CU329672">
    <property type="protein sequence ID" value="CAA19311.1"/>
    <property type="molecule type" value="Genomic_DNA"/>
</dbReference>
<dbReference type="EMBL" id="D89105">
    <property type="protein sequence ID" value="BAA13768.1"/>
    <property type="molecule type" value="mRNA"/>
</dbReference>
<dbReference type="PIR" id="T41164">
    <property type="entry name" value="T41164"/>
</dbReference>
<dbReference type="RefSeq" id="NP_588549.1">
    <property type="nucleotide sequence ID" value="NM_001023536.2"/>
</dbReference>
<dbReference type="SMR" id="O74976"/>
<dbReference type="BioGRID" id="275823">
    <property type="interactions" value="28"/>
</dbReference>
<dbReference type="FunCoup" id="O74976">
    <property type="interactions" value="348"/>
</dbReference>
<dbReference type="STRING" id="284812.O74976"/>
<dbReference type="iPTMnet" id="O74976"/>
<dbReference type="PaxDb" id="4896-SPCC1827.03c.1"/>
<dbReference type="EnsemblFungi" id="SPCC1827.03c.1">
    <property type="protein sequence ID" value="SPCC1827.03c.1:pep"/>
    <property type="gene ID" value="SPCC1827.03c"/>
</dbReference>
<dbReference type="PomBase" id="SPCC1827.03c">
    <property type="gene designation" value="pcs60"/>
</dbReference>
<dbReference type="VEuPathDB" id="FungiDB:SPCC1827.03c"/>
<dbReference type="eggNOG" id="KOG1176">
    <property type="taxonomic scope" value="Eukaryota"/>
</dbReference>
<dbReference type="HOGENOM" id="CLU_000022_59_0_1"/>
<dbReference type="InParanoid" id="O74976"/>
<dbReference type="OMA" id="TFRGYYR"/>
<dbReference type="PhylomeDB" id="O74976"/>
<dbReference type="PRO" id="PR:O74976"/>
<dbReference type="Proteomes" id="UP000002485">
    <property type="component" value="Chromosome III"/>
</dbReference>
<dbReference type="GO" id="GO:0005829">
    <property type="term" value="C:cytosol"/>
    <property type="evidence" value="ECO:0007005"/>
    <property type="project" value="PomBase"/>
</dbReference>
<dbReference type="GO" id="GO:0005782">
    <property type="term" value="C:peroxisomal matrix"/>
    <property type="evidence" value="ECO:0007669"/>
    <property type="project" value="UniProtKB-SubCell"/>
</dbReference>
<dbReference type="GO" id="GO:0005778">
    <property type="term" value="C:peroxisomal membrane"/>
    <property type="evidence" value="ECO:0000266"/>
    <property type="project" value="PomBase"/>
</dbReference>
<dbReference type="GO" id="GO:0005524">
    <property type="term" value="F:ATP binding"/>
    <property type="evidence" value="ECO:0007669"/>
    <property type="project" value="UniProtKB-KW"/>
</dbReference>
<dbReference type="GO" id="GO:0016887">
    <property type="term" value="F:ATP hydrolysis activity"/>
    <property type="evidence" value="ECO:0000305"/>
    <property type="project" value="PomBase"/>
</dbReference>
<dbReference type="GO" id="GO:0031956">
    <property type="term" value="F:medium-chain fatty acid-CoA ligase activity"/>
    <property type="evidence" value="ECO:0000318"/>
    <property type="project" value="GO_Central"/>
</dbReference>
<dbReference type="GO" id="GO:0050203">
    <property type="term" value="F:oxalate-CoA ligase activity"/>
    <property type="evidence" value="ECO:0007669"/>
    <property type="project" value="UniProtKB-EC"/>
</dbReference>
<dbReference type="GO" id="GO:0006084">
    <property type="term" value="P:acetyl-CoA metabolic process"/>
    <property type="evidence" value="ECO:0000255"/>
    <property type="project" value="PomBase"/>
</dbReference>
<dbReference type="GO" id="GO:0006631">
    <property type="term" value="P:fatty acid metabolic process"/>
    <property type="evidence" value="ECO:0000318"/>
    <property type="project" value="GO_Central"/>
</dbReference>
<dbReference type="CDD" id="cd05926">
    <property type="entry name" value="FACL_fum10p_like"/>
    <property type="match status" value="1"/>
</dbReference>
<dbReference type="Gene3D" id="3.30.300.30">
    <property type="match status" value="1"/>
</dbReference>
<dbReference type="Gene3D" id="3.40.50.12780">
    <property type="entry name" value="N-terminal domain of ligase-like"/>
    <property type="match status" value="1"/>
</dbReference>
<dbReference type="InterPro" id="IPR025110">
    <property type="entry name" value="AMP-bd_C"/>
</dbReference>
<dbReference type="InterPro" id="IPR045851">
    <property type="entry name" value="AMP-bd_C_sf"/>
</dbReference>
<dbReference type="InterPro" id="IPR020845">
    <property type="entry name" value="AMP-binding_CS"/>
</dbReference>
<dbReference type="InterPro" id="IPR000873">
    <property type="entry name" value="AMP-dep_synth/lig_dom"/>
</dbReference>
<dbReference type="InterPro" id="IPR042099">
    <property type="entry name" value="ANL_N_sf"/>
</dbReference>
<dbReference type="InterPro" id="IPR045310">
    <property type="entry name" value="Pcs60-like"/>
</dbReference>
<dbReference type="PANTHER" id="PTHR43201">
    <property type="entry name" value="ACYL-COA SYNTHETASE"/>
    <property type="match status" value="1"/>
</dbReference>
<dbReference type="PANTHER" id="PTHR43201:SF5">
    <property type="entry name" value="MEDIUM-CHAIN ACYL-COA LIGASE ACSF2, MITOCHONDRIAL"/>
    <property type="match status" value="1"/>
</dbReference>
<dbReference type="Pfam" id="PF00501">
    <property type="entry name" value="AMP-binding"/>
    <property type="match status" value="1"/>
</dbReference>
<dbReference type="Pfam" id="PF13193">
    <property type="entry name" value="AMP-binding_C"/>
    <property type="match status" value="1"/>
</dbReference>
<dbReference type="SUPFAM" id="SSF56801">
    <property type="entry name" value="Acetyl-CoA synthetase-like"/>
    <property type="match status" value="1"/>
</dbReference>
<dbReference type="PROSITE" id="PS00455">
    <property type="entry name" value="AMP_BINDING"/>
    <property type="match status" value="1"/>
</dbReference>
<sequence length="512" mass="56274">MSFTTLYSAIQGDASARALVAPSLNAELSFSELRIAIMDLQRQIASLGIKVGDPVNIAIPNGLEFVVAFYAVSWQRAICGPLNSNYKQSEFEFYIDDLKSKLVIVPEGSVAANTPAVRAAKKLSVAVAELAWCPKSRLVRIVHFEGAKINAPQPLGLPQPDDVMLVLHTSGTTGRPKVVPLTHKNLCRSIHNITTSYRLDPRDTSYVVMPLFHVHGLLCGLLSTLASGGCAVVPPKFSAHSFWKEFIQYGATWYTAVPTIHQILLRTPPPKPLPRIRFIRSCSSPLAPPVLSKLEATFRAPVLEAYAMTEASHQMTTNPLPPLVHKPHSVGKPFGVELKILDQKGNEMPQGKEGEICVRGINVTKGYLNNPAANKSSFTKDRFFRTGDEGKLDKDGYVFITGRIKELVNRGGEKISPAEIDAVLMQHPDVSEAVCFAVPDEKYGQDIQAAINPVAGKTVTPKQLHDYLEQKVAAFKIPKKFYFTDRIPKTATGKVQRRLVCDAFFNHSKAKL</sequence>
<keyword id="KW-0067">ATP-binding</keyword>
<keyword id="KW-0436">Ligase</keyword>
<keyword id="KW-0472">Membrane</keyword>
<keyword id="KW-0547">Nucleotide-binding</keyword>
<keyword id="KW-0576">Peroxisome</keyword>
<keyword id="KW-0597">Phosphoprotein</keyword>
<keyword id="KW-1185">Reference proteome</keyword>
<feature type="chain" id="PRO_0000193183" description="Oxalate--CoA ligase">
    <location>
        <begin position="1"/>
        <end position="512"/>
    </location>
</feature>
<feature type="short sequence motif" description="FACS" evidence="1">
    <location>
        <begin position="381"/>
        <end position="429"/>
    </location>
</feature>
<feature type="short sequence motif" description="Microbody targeting signal" evidence="4">
    <location>
        <begin position="510"/>
        <end position="512"/>
    </location>
</feature>
<feature type="binding site" evidence="3">
    <location>
        <begin position="168"/>
        <end position="179"/>
    </location>
    <ligand>
        <name>ATP</name>
        <dbReference type="ChEBI" id="CHEBI:30616"/>
    </ligand>
</feature>
<feature type="modified residue" description="Phosphoserine" evidence="5">
    <location>
        <position position="283"/>
    </location>
</feature>
<feature type="modified residue" description="Phosphoserine" evidence="5">
    <location>
        <position position="284"/>
    </location>
</feature>
<feature type="sequence conflict" description="In Ref. 2; BAA13768." evidence="6" ref="2">
    <location>
        <position position="218"/>
    </location>
</feature>
<feature type="sequence conflict" description="In Ref. 2; BAA13768." evidence="6" ref="2">
    <original>P</original>
    <variation>T</variation>
    <location>
        <position position="288"/>
    </location>
</feature>
<feature type="sequence conflict" description="In Ref. 2; BAA13768." evidence="6" ref="2">
    <original>A</original>
    <variation>G</variation>
    <location>
        <position position="305"/>
    </location>
</feature>
<gene>
    <name type="primary">pcs60</name>
    <name type="ORF">SPCC1827.03c</name>
</gene>
<proteinExistence type="evidence at protein level"/>